<dbReference type="EMBL" id="CP001048">
    <property type="protein sequence ID" value="ACC88211.1"/>
    <property type="molecule type" value="Genomic_DNA"/>
</dbReference>
<dbReference type="RefSeq" id="WP_002210738.1">
    <property type="nucleotide sequence ID" value="NZ_CP009780.1"/>
</dbReference>
<dbReference type="SMR" id="B2K8G1"/>
<dbReference type="GeneID" id="57977261"/>
<dbReference type="KEGG" id="ypb:YPTS_1236"/>
<dbReference type="PATRIC" id="fig|502801.10.peg.585"/>
<dbReference type="GO" id="GO:0042597">
    <property type="term" value="C:periplasmic space"/>
    <property type="evidence" value="ECO:0007669"/>
    <property type="project" value="UniProtKB-SubCell"/>
</dbReference>
<dbReference type="GO" id="GO:0051301">
    <property type="term" value="P:cell division"/>
    <property type="evidence" value="ECO:0007669"/>
    <property type="project" value="UniProtKB-UniRule"/>
</dbReference>
<dbReference type="GO" id="GO:0017038">
    <property type="term" value="P:protein import"/>
    <property type="evidence" value="ECO:0007669"/>
    <property type="project" value="InterPro"/>
</dbReference>
<dbReference type="FunFam" id="2.120.10.30:FF:000022">
    <property type="entry name" value="Tol-Pal system protein TolB"/>
    <property type="match status" value="1"/>
</dbReference>
<dbReference type="Gene3D" id="2.120.10.30">
    <property type="entry name" value="TolB, C-terminal domain"/>
    <property type="match status" value="1"/>
</dbReference>
<dbReference type="Gene3D" id="3.40.50.10070">
    <property type="entry name" value="TolB, N-terminal domain"/>
    <property type="match status" value="1"/>
</dbReference>
<dbReference type="HAMAP" id="MF_00671">
    <property type="entry name" value="TolB"/>
    <property type="match status" value="1"/>
</dbReference>
<dbReference type="InterPro" id="IPR011042">
    <property type="entry name" value="6-blade_b-propeller_TolB-like"/>
</dbReference>
<dbReference type="InterPro" id="IPR011659">
    <property type="entry name" value="PD40"/>
</dbReference>
<dbReference type="InterPro" id="IPR014167">
    <property type="entry name" value="Tol-Pal_TolB"/>
</dbReference>
<dbReference type="InterPro" id="IPR007195">
    <property type="entry name" value="TolB_N"/>
</dbReference>
<dbReference type="NCBIfam" id="TIGR02800">
    <property type="entry name" value="propeller_TolB"/>
    <property type="match status" value="1"/>
</dbReference>
<dbReference type="PANTHER" id="PTHR36842:SF1">
    <property type="entry name" value="PROTEIN TOLB"/>
    <property type="match status" value="1"/>
</dbReference>
<dbReference type="PANTHER" id="PTHR36842">
    <property type="entry name" value="PROTEIN TOLB HOMOLOG"/>
    <property type="match status" value="1"/>
</dbReference>
<dbReference type="Pfam" id="PF07676">
    <property type="entry name" value="PD40"/>
    <property type="match status" value="4"/>
</dbReference>
<dbReference type="Pfam" id="PF04052">
    <property type="entry name" value="TolB_N"/>
    <property type="match status" value="1"/>
</dbReference>
<dbReference type="SUPFAM" id="SSF52964">
    <property type="entry name" value="TolB, N-terminal domain"/>
    <property type="match status" value="1"/>
</dbReference>
<dbReference type="SUPFAM" id="SSF69304">
    <property type="entry name" value="Tricorn protease N-terminal domain"/>
    <property type="match status" value="1"/>
</dbReference>
<proteinExistence type="inferred from homology"/>
<sequence>MKQAFRVALGFLVLWASVLHAEVRIEITQGVDSARPIGVVPFKWMGPGTPPEEIGAIVGADLRNSGKFNPIDAARMPQQPSTAAEVTPAAWTALGIDAVVVGQVQPSADGSYVVSYQLVDTSGSAGSILAQNQYKVTKQWLRYSAHTVSDEVFEKLTGIKGAFRTRIAYVVKTNGGKFPHELRVSDYDGYNQFVVHRSPEPLMSPAWSPDGSKIAYVTFESGKSALVIQTLANGAIRQVASFPRHNGAPAFSPDGTKLAFALSKSGSLNLYVMDLASGQISQVTDGRSNNTEPSWFPDSQNLAYTSDQGGRPQVYKVNINGGVPQRITWEGSQNQNADVSPDGKFLVLVSSNGGAQHIAKQDLETGAVQVLTDTLLDETPSIAPNGTMVIYSSTQGLGSVLQLVSTDGRFKARLPATDGQVKFPAWSPYL</sequence>
<evidence type="ECO:0000255" key="1">
    <source>
        <dbReference type="HAMAP-Rule" id="MF_00671"/>
    </source>
</evidence>
<name>TOLB_YERPB</name>
<comment type="function">
    <text evidence="1">Part of the Tol-Pal system, which plays a role in outer membrane invagination during cell division and is important for maintaining outer membrane integrity. TolB occupies a key intermediary position in the Tol-Pal system because it communicates directly with both membrane-embedded components, Pal in the outer membrane and TolA in the inner membrane.</text>
</comment>
<comment type="subunit">
    <text evidence="1">The Tol-Pal system is composed of five core proteins: the inner membrane proteins TolA, TolQ and TolR, the periplasmic protein TolB and the outer membrane protein Pal. They form a network linking the inner and outer membranes and the peptidoglycan layer.</text>
</comment>
<comment type="subcellular location">
    <subcellularLocation>
        <location evidence="1">Periplasm</location>
    </subcellularLocation>
</comment>
<comment type="similarity">
    <text evidence="1">Belongs to the TolB family.</text>
</comment>
<feature type="signal peptide" evidence="1">
    <location>
        <begin position="1"/>
        <end position="21"/>
    </location>
</feature>
<feature type="chain" id="PRO_5000345868" description="Tol-Pal system protein TolB" evidence="1">
    <location>
        <begin position="22"/>
        <end position="430"/>
    </location>
</feature>
<gene>
    <name evidence="1" type="primary">tolB</name>
    <name type="ordered locus">YPTS_1236</name>
</gene>
<reference key="1">
    <citation type="submission" date="2008-04" db="EMBL/GenBank/DDBJ databases">
        <title>Complete sequence of Yersinia pseudotuberculosis PB1/+.</title>
        <authorList>
            <person name="Copeland A."/>
            <person name="Lucas S."/>
            <person name="Lapidus A."/>
            <person name="Glavina del Rio T."/>
            <person name="Dalin E."/>
            <person name="Tice H."/>
            <person name="Bruce D."/>
            <person name="Goodwin L."/>
            <person name="Pitluck S."/>
            <person name="Munk A.C."/>
            <person name="Brettin T."/>
            <person name="Detter J.C."/>
            <person name="Han C."/>
            <person name="Tapia R."/>
            <person name="Schmutz J."/>
            <person name="Larimer F."/>
            <person name="Land M."/>
            <person name="Hauser L."/>
            <person name="Challacombe J.F."/>
            <person name="Green L."/>
            <person name="Lindler L.E."/>
            <person name="Nikolich M.P."/>
            <person name="Richardson P."/>
        </authorList>
    </citation>
    <scope>NUCLEOTIDE SEQUENCE [LARGE SCALE GENOMIC DNA]</scope>
    <source>
        <strain>PB1/+</strain>
    </source>
</reference>
<organism>
    <name type="scientific">Yersinia pseudotuberculosis serotype IB (strain PB1/+)</name>
    <dbReference type="NCBI Taxonomy" id="502801"/>
    <lineage>
        <taxon>Bacteria</taxon>
        <taxon>Pseudomonadati</taxon>
        <taxon>Pseudomonadota</taxon>
        <taxon>Gammaproteobacteria</taxon>
        <taxon>Enterobacterales</taxon>
        <taxon>Yersiniaceae</taxon>
        <taxon>Yersinia</taxon>
    </lineage>
</organism>
<keyword id="KW-0131">Cell cycle</keyword>
<keyword id="KW-0132">Cell division</keyword>
<keyword id="KW-0574">Periplasm</keyword>
<keyword id="KW-0732">Signal</keyword>
<accession>B2K8G1</accession>
<protein>
    <recommendedName>
        <fullName evidence="1">Tol-Pal system protein TolB</fullName>
    </recommendedName>
</protein>